<evidence type="ECO:0000250" key="1"/>
<evidence type="ECO:0000255" key="2">
    <source>
        <dbReference type="HAMAP-Rule" id="MF_00500"/>
    </source>
</evidence>
<evidence type="ECO:0000256" key="3">
    <source>
        <dbReference type="SAM" id="MobiDB-lite"/>
    </source>
</evidence>
<evidence type="ECO:0000305" key="4"/>
<sequence length="87" mass="9684">MANIKSAKKRAIQSEKARKHNASRRSMMRTFIKKVYAAIEAGDKAAAQKAFNEMQPIVDRQAAKGLIHKNKAARHKANLTAQINKLA</sequence>
<dbReference type="EMBL" id="AE014075">
    <property type="protein sequence ID" value="AAN78527.1"/>
    <property type="molecule type" value="Genomic_DNA"/>
</dbReference>
<dbReference type="RefSeq" id="WP_001274021.1">
    <property type="nucleotide sequence ID" value="NZ_CP051263.1"/>
</dbReference>
<dbReference type="SMR" id="P0A7U8"/>
<dbReference type="STRING" id="199310.c0027"/>
<dbReference type="GeneID" id="93777413"/>
<dbReference type="KEGG" id="ecc:c0027"/>
<dbReference type="eggNOG" id="COG0268">
    <property type="taxonomic scope" value="Bacteria"/>
</dbReference>
<dbReference type="HOGENOM" id="CLU_160655_4_0_6"/>
<dbReference type="BioCyc" id="ECOL199310:C0027-MONOMER"/>
<dbReference type="Proteomes" id="UP000001410">
    <property type="component" value="Chromosome"/>
</dbReference>
<dbReference type="GO" id="GO:0005829">
    <property type="term" value="C:cytosol"/>
    <property type="evidence" value="ECO:0007669"/>
    <property type="project" value="TreeGrafter"/>
</dbReference>
<dbReference type="GO" id="GO:0015935">
    <property type="term" value="C:small ribosomal subunit"/>
    <property type="evidence" value="ECO:0007669"/>
    <property type="project" value="TreeGrafter"/>
</dbReference>
<dbReference type="GO" id="GO:0070181">
    <property type="term" value="F:small ribosomal subunit rRNA binding"/>
    <property type="evidence" value="ECO:0007669"/>
    <property type="project" value="TreeGrafter"/>
</dbReference>
<dbReference type="GO" id="GO:0003735">
    <property type="term" value="F:structural constituent of ribosome"/>
    <property type="evidence" value="ECO:0007669"/>
    <property type="project" value="InterPro"/>
</dbReference>
<dbReference type="GO" id="GO:0006412">
    <property type="term" value="P:translation"/>
    <property type="evidence" value="ECO:0007669"/>
    <property type="project" value="UniProtKB-UniRule"/>
</dbReference>
<dbReference type="FunFam" id="1.20.58.110:FF:000001">
    <property type="entry name" value="30S ribosomal protein S20"/>
    <property type="match status" value="1"/>
</dbReference>
<dbReference type="Gene3D" id="1.20.58.110">
    <property type="entry name" value="Ribosomal protein S20"/>
    <property type="match status" value="1"/>
</dbReference>
<dbReference type="HAMAP" id="MF_00500">
    <property type="entry name" value="Ribosomal_bS20"/>
    <property type="match status" value="1"/>
</dbReference>
<dbReference type="InterPro" id="IPR002583">
    <property type="entry name" value="Ribosomal_bS20"/>
</dbReference>
<dbReference type="InterPro" id="IPR036510">
    <property type="entry name" value="Ribosomal_bS20_sf"/>
</dbReference>
<dbReference type="NCBIfam" id="TIGR00029">
    <property type="entry name" value="S20"/>
    <property type="match status" value="1"/>
</dbReference>
<dbReference type="PANTHER" id="PTHR33398">
    <property type="entry name" value="30S RIBOSOMAL PROTEIN S20"/>
    <property type="match status" value="1"/>
</dbReference>
<dbReference type="PANTHER" id="PTHR33398:SF1">
    <property type="entry name" value="SMALL RIBOSOMAL SUBUNIT PROTEIN BS20C"/>
    <property type="match status" value="1"/>
</dbReference>
<dbReference type="Pfam" id="PF01649">
    <property type="entry name" value="Ribosomal_S20p"/>
    <property type="match status" value="1"/>
</dbReference>
<dbReference type="SUPFAM" id="SSF46992">
    <property type="entry name" value="Ribosomal protein S20"/>
    <property type="match status" value="1"/>
</dbReference>
<feature type="initiator methionine" description="Removed" evidence="1">
    <location>
        <position position="1"/>
    </location>
</feature>
<feature type="chain" id="PRO_0000167959" description="Small ribosomal subunit protein bS20">
    <location>
        <begin position="2"/>
        <end position="87"/>
    </location>
</feature>
<feature type="region of interest" description="Disordered" evidence="3">
    <location>
        <begin position="1"/>
        <end position="26"/>
    </location>
</feature>
<gene>
    <name evidence="2" type="primary">rpsT</name>
    <name type="ordered locus">c0027</name>
</gene>
<comment type="function">
    <text evidence="2">Binds directly to 16S ribosomal RNA.</text>
</comment>
<comment type="similarity">
    <text evidence="2">Belongs to the bacterial ribosomal protein bS20 family.</text>
</comment>
<proteinExistence type="inferred from homology"/>
<accession>P0A7U8</accession>
<accession>P02378</accession>
<keyword id="KW-1185">Reference proteome</keyword>
<keyword id="KW-0687">Ribonucleoprotein</keyword>
<keyword id="KW-0689">Ribosomal protein</keyword>
<keyword id="KW-0694">RNA-binding</keyword>
<keyword id="KW-0699">rRNA-binding</keyword>
<reference key="1">
    <citation type="journal article" date="2002" name="Proc. Natl. Acad. Sci. U.S.A.">
        <title>Extensive mosaic structure revealed by the complete genome sequence of uropathogenic Escherichia coli.</title>
        <authorList>
            <person name="Welch R.A."/>
            <person name="Burland V."/>
            <person name="Plunkett G. III"/>
            <person name="Redford P."/>
            <person name="Roesch P."/>
            <person name="Rasko D."/>
            <person name="Buckles E.L."/>
            <person name="Liou S.-R."/>
            <person name="Boutin A."/>
            <person name="Hackett J."/>
            <person name="Stroud D."/>
            <person name="Mayhew G.F."/>
            <person name="Rose D.J."/>
            <person name="Zhou S."/>
            <person name="Schwartz D.C."/>
            <person name="Perna N.T."/>
            <person name="Mobley H.L.T."/>
            <person name="Donnenberg M.S."/>
            <person name="Blattner F.R."/>
        </authorList>
    </citation>
    <scope>NUCLEOTIDE SEQUENCE [LARGE SCALE GENOMIC DNA]</scope>
    <source>
        <strain>CFT073 / ATCC 700928 / UPEC</strain>
    </source>
</reference>
<organism>
    <name type="scientific">Escherichia coli O6:H1 (strain CFT073 / ATCC 700928 / UPEC)</name>
    <dbReference type="NCBI Taxonomy" id="199310"/>
    <lineage>
        <taxon>Bacteria</taxon>
        <taxon>Pseudomonadati</taxon>
        <taxon>Pseudomonadota</taxon>
        <taxon>Gammaproteobacteria</taxon>
        <taxon>Enterobacterales</taxon>
        <taxon>Enterobacteriaceae</taxon>
        <taxon>Escherichia</taxon>
    </lineage>
</organism>
<protein>
    <recommendedName>
        <fullName evidence="2">Small ribosomal subunit protein bS20</fullName>
    </recommendedName>
    <alternativeName>
        <fullName evidence="4">30S ribosomal protein S20</fullName>
    </alternativeName>
</protein>
<name>RS20_ECOL6</name>